<feature type="chain" id="PRO_0000375256" description="SKP1-like protein 15">
    <location>
        <begin position="1"/>
        <end position="177"/>
    </location>
</feature>
<feature type="region of interest" description="Interaction with the F-box domain of F-box proteins" evidence="1">
    <location>
        <begin position="108"/>
        <end position="167"/>
    </location>
</feature>
<feature type="splice variant" id="VSP_037362" description="In isoform 2." evidence="3">
    <original>EAKQNLDAWDAEFMKNIDMETIFKLILAAN</original>
    <variation>VAGRFLNQLKKEMMHLRRRSRISMLGTQSS</variation>
    <location>
        <begin position="83"/>
        <end position="112"/>
    </location>
</feature>
<feature type="splice variant" id="VSP_037363" description="In isoform 2." evidence="3">
    <location>
        <begin position="113"/>
        <end position="177"/>
    </location>
</feature>
<organism>
    <name type="scientific">Arabidopsis thaliana</name>
    <name type="common">Mouse-ear cress</name>
    <dbReference type="NCBI Taxonomy" id="3702"/>
    <lineage>
        <taxon>Eukaryota</taxon>
        <taxon>Viridiplantae</taxon>
        <taxon>Streptophyta</taxon>
        <taxon>Embryophyta</taxon>
        <taxon>Tracheophyta</taxon>
        <taxon>Spermatophyta</taxon>
        <taxon>Magnoliopsida</taxon>
        <taxon>eudicotyledons</taxon>
        <taxon>Gunneridae</taxon>
        <taxon>Pentapetalae</taxon>
        <taxon>rosids</taxon>
        <taxon>malvids</taxon>
        <taxon>Brassicales</taxon>
        <taxon>Brassicaceae</taxon>
        <taxon>Camelineae</taxon>
        <taxon>Arabidopsis</taxon>
    </lineage>
</organism>
<proteinExistence type="evidence at transcript level"/>
<gene>
    <name type="primary">ASK15</name>
    <name type="ordered locus">At3g25650</name>
    <name type="ORF">T5M7.16</name>
</gene>
<sequence>MSSNKIVLTSSDGESFQVEEVVARKLQIVKHLLEDDCVINEIPLQNVTGNILSIVLEYCKKHVDDVVDDDASEEPKKKKPDDEAKQNLDAWDAEFMKNIDMETIFKLILAANYLNVEGLLGLTCQTVADYIKDKTPEEVRELFNIENDFTHEEEEEAIRKENAWAFEADTKHEDPKP</sequence>
<name>ASK15_ARATH</name>
<comment type="function">
    <text evidence="1">Involved in ubiquitination and subsequent proteasomal degradation of target proteins. Together with CUL1, RBX1 and a F-box protein, it forms a SCF E3 ubiquitin ligase complex. The functional specificity of this complex depends on the type of F-box protein. In the SCF complex, it serves as an adapter that links the F-box protein to CUL1 (By similarity).</text>
</comment>
<comment type="pathway">
    <text>Protein modification; protein ubiquitination.</text>
</comment>
<comment type="subunit">
    <text evidence="1">Part of a SCF (SKP1-cullin-F-box) protein ligase complex.</text>
</comment>
<comment type="subcellular location">
    <subcellularLocation>
        <location evidence="1">Nucleus</location>
    </subcellularLocation>
</comment>
<comment type="alternative products">
    <event type="alternative splicing"/>
    <isoform>
        <id>Q1PEL7-1</id>
        <name>1</name>
        <sequence type="displayed"/>
    </isoform>
    <isoform>
        <id>Q1PEL7-2</id>
        <name>2</name>
        <sequence type="described" ref="VSP_037362 VSP_037363"/>
    </isoform>
</comment>
<comment type="tissue specificity">
    <text evidence="2">Expressed at low levels in seedlings and leaves.</text>
</comment>
<comment type="developmental stage">
    <text evidence="2">Highly expressed in the pith and vascular bundle in the stem. Found in the pedicel of young buds. Also expressed in the inner epidermis of carpels and pedicels in mature flowers. In siliques, mostly expressed in inner epidermis of the valve.</text>
</comment>
<comment type="similarity">
    <text evidence="4">Belongs to the SKP1 family.</text>
</comment>
<comment type="sequence caution" evidence="4">
    <conflict type="erroneous gene model prediction">
        <sequence resource="EMBL-CDS" id="BAB03085"/>
    </conflict>
</comment>
<dbReference type="EMBL" id="AP001313">
    <property type="protein sequence ID" value="BAB03085.1"/>
    <property type="status" value="ALT_SEQ"/>
    <property type="molecule type" value="Genomic_DNA"/>
</dbReference>
<dbReference type="EMBL" id="CP002686">
    <property type="protein sequence ID" value="AEE77046.1"/>
    <property type="molecule type" value="Genomic_DNA"/>
</dbReference>
<dbReference type="EMBL" id="DQ446700">
    <property type="protein sequence ID" value="ABE65968.1"/>
    <property type="molecule type" value="mRNA"/>
</dbReference>
<dbReference type="RefSeq" id="NP_566773.1">
    <molecule id="Q1PEL7-1"/>
    <property type="nucleotide sequence ID" value="NM_113463.1"/>
</dbReference>
<dbReference type="SMR" id="Q1PEL7"/>
<dbReference type="BioGRID" id="7483">
    <property type="interactions" value="3"/>
</dbReference>
<dbReference type="ComplexPortal" id="CPX-1442">
    <property type="entry name" value="SCF(COI1) ubiquitin ligase complex, variant CUL1-RBX1A-ASK15"/>
</dbReference>
<dbReference type="ComplexPortal" id="CPX-1463">
    <property type="entry name" value="SCF(COI1) ubiquitin ligase complex, variant CUL1-RBX1B-ASK15"/>
</dbReference>
<dbReference type="ComplexPortal" id="CPX-1485">
    <property type="entry name" value="SCF(COI1) ubiquitin ligase complex, variant CUL2-RBX1A-ASK15"/>
</dbReference>
<dbReference type="ComplexPortal" id="CPX-1508">
    <property type="entry name" value="SCF(COI1) ubiquitin ligase complex, variant CUL2-RBX1B-ASK15"/>
</dbReference>
<dbReference type="ComplexPortal" id="CPX-1528">
    <property type="entry name" value="SCF(TIR1) ubiquitin ligase complex, variant CUL1-RBX1A-ASK15"/>
</dbReference>
<dbReference type="ComplexPortal" id="CPX-1549">
    <property type="entry name" value="SCF(TIR1) ubiquitin ligase complex, variant CUL1-RBX1B-ASK15"/>
</dbReference>
<dbReference type="ComplexPortal" id="CPX-1571">
    <property type="entry name" value="SCF(TIR1) ubiquitin ligase complex, variant CUL2-RBX1A-ASK15"/>
</dbReference>
<dbReference type="ComplexPortal" id="CPX-1592">
    <property type="entry name" value="SCF(TIR1) ubiquitin ligase complex, variant CUL2-RBX1B-ASK15"/>
</dbReference>
<dbReference type="FunCoup" id="Q1PEL7">
    <property type="interactions" value="416"/>
</dbReference>
<dbReference type="IntAct" id="Q1PEL7">
    <property type="interactions" value="5"/>
</dbReference>
<dbReference type="STRING" id="3702.Q1PEL7"/>
<dbReference type="PaxDb" id="3702-AT3G25650.1"/>
<dbReference type="EnsemblPlants" id="AT3G25650.1">
    <molecule id="Q1PEL7-1"/>
    <property type="protein sequence ID" value="AT3G25650.1"/>
    <property type="gene ID" value="AT3G25650"/>
</dbReference>
<dbReference type="GeneID" id="822152"/>
<dbReference type="Gramene" id="AT3G25650.1">
    <molecule id="Q1PEL7-1"/>
    <property type="protein sequence ID" value="AT3G25650.1"/>
    <property type="gene ID" value="AT3G25650"/>
</dbReference>
<dbReference type="KEGG" id="ath:AT3G25650"/>
<dbReference type="Araport" id="AT3G25650"/>
<dbReference type="TAIR" id="AT3G25650">
    <property type="gene designation" value="SK15"/>
</dbReference>
<dbReference type="eggNOG" id="KOG1724">
    <property type="taxonomic scope" value="Eukaryota"/>
</dbReference>
<dbReference type="HOGENOM" id="CLU_059252_6_1_1"/>
<dbReference type="InParanoid" id="Q1PEL7"/>
<dbReference type="OMA" id="ENDFTHE"/>
<dbReference type="PhylomeDB" id="Q1PEL7"/>
<dbReference type="UniPathway" id="UPA00143"/>
<dbReference type="PRO" id="PR:Q1PEL7"/>
<dbReference type="Proteomes" id="UP000006548">
    <property type="component" value="Chromosome 3"/>
</dbReference>
<dbReference type="ExpressionAtlas" id="Q1PEL7">
    <property type="expression patterns" value="baseline and differential"/>
</dbReference>
<dbReference type="GO" id="GO:0005634">
    <property type="term" value="C:nucleus"/>
    <property type="evidence" value="ECO:0007669"/>
    <property type="project" value="UniProtKB-SubCell"/>
</dbReference>
<dbReference type="GO" id="GO:0019005">
    <property type="term" value="C:SCF ubiquitin ligase complex"/>
    <property type="evidence" value="ECO:0000250"/>
    <property type="project" value="TAIR"/>
</dbReference>
<dbReference type="GO" id="GO:0009734">
    <property type="term" value="P:auxin-activated signaling pathway"/>
    <property type="evidence" value="ECO:0000303"/>
    <property type="project" value="ComplexPortal"/>
</dbReference>
<dbReference type="GO" id="GO:0009867">
    <property type="term" value="P:jasmonic acid mediated signaling pathway"/>
    <property type="evidence" value="ECO:0000315"/>
    <property type="project" value="ComplexPortal"/>
</dbReference>
<dbReference type="GO" id="GO:0016567">
    <property type="term" value="P:protein ubiquitination"/>
    <property type="evidence" value="ECO:0007669"/>
    <property type="project" value="UniProtKB-UniPathway"/>
</dbReference>
<dbReference type="GO" id="GO:0009733">
    <property type="term" value="P:response to auxin"/>
    <property type="evidence" value="ECO:0000303"/>
    <property type="project" value="ComplexPortal"/>
</dbReference>
<dbReference type="GO" id="GO:0009753">
    <property type="term" value="P:response to jasmonic acid"/>
    <property type="evidence" value="ECO:0000315"/>
    <property type="project" value="ComplexPortal"/>
</dbReference>
<dbReference type="GO" id="GO:0006511">
    <property type="term" value="P:ubiquitin-dependent protein catabolic process"/>
    <property type="evidence" value="ECO:0007669"/>
    <property type="project" value="InterPro"/>
</dbReference>
<dbReference type="CDD" id="cd18322">
    <property type="entry name" value="BTB_POZ_SKP1"/>
    <property type="match status" value="1"/>
</dbReference>
<dbReference type="FunFam" id="3.30.710.10:FF:000269">
    <property type="entry name" value="SKP1-like protein 14"/>
    <property type="match status" value="1"/>
</dbReference>
<dbReference type="Gene3D" id="3.30.710.10">
    <property type="entry name" value="Potassium Channel Kv1.1, Chain A"/>
    <property type="match status" value="1"/>
</dbReference>
<dbReference type="InterPro" id="IPR016897">
    <property type="entry name" value="SKP1"/>
</dbReference>
<dbReference type="InterPro" id="IPR001232">
    <property type="entry name" value="SKP1-like"/>
</dbReference>
<dbReference type="InterPro" id="IPR036296">
    <property type="entry name" value="SKP1-like_dim_sf"/>
</dbReference>
<dbReference type="InterPro" id="IPR011333">
    <property type="entry name" value="SKP1/BTB/POZ_sf"/>
</dbReference>
<dbReference type="InterPro" id="IPR016072">
    <property type="entry name" value="Skp1_comp_dimer"/>
</dbReference>
<dbReference type="InterPro" id="IPR016073">
    <property type="entry name" value="Skp1_comp_POZ"/>
</dbReference>
<dbReference type="PANTHER" id="PTHR11165">
    <property type="entry name" value="SKP1"/>
    <property type="match status" value="1"/>
</dbReference>
<dbReference type="Pfam" id="PF01466">
    <property type="entry name" value="Skp1"/>
    <property type="match status" value="1"/>
</dbReference>
<dbReference type="Pfam" id="PF03931">
    <property type="entry name" value="Skp1_POZ"/>
    <property type="match status" value="1"/>
</dbReference>
<dbReference type="PIRSF" id="PIRSF028729">
    <property type="entry name" value="E3_ubiquit_lig_SCF_Skp"/>
    <property type="match status" value="1"/>
</dbReference>
<dbReference type="SMART" id="SM00512">
    <property type="entry name" value="Skp1"/>
    <property type="match status" value="1"/>
</dbReference>
<dbReference type="SUPFAM" id="SSF54695">
    <property type="entry name" value="POZ domain"/>
    <property type="match status" value="1"/>
</dbReference>
<dbReference type="SUPFAM" id="SSF81382">
    <property type="entry name" value="Skp1 dimerisation domain-like"/>
    <property type="match status" value="1"/>
</dbReference>
<reference key="1">
    <citation type="journal article" date="2000" name="DNA Res.">
        <title>Structural analysis of Arabidopsis thaliana chromosome 3. II. Sequence features of the 4,251,695 bp regions covered by 90 P1, TAC and BAC clones.</title>
        <authorList>
            <person name="Kaneko T."/>
            <person name="Katoh T."/>
            <person name="Sato S."/>
            <person name="Nakamura Y."/>
            <person name="Asamizu E."/>
            <person name="Tabata S."/>
        </authorList>
    </citation>
    <scope>NUCLEOTIDE SEQUENCE [LARGE SCALE GENOMIC DNA]</scope>
    <source>
        <strain>cv. Columbia</strain>
    </source>
</reference>
<reference key="2">
    <citation type="journal article" date="2017" name="Plant J.">
        <title>Araport11: a complete reannotation of the Arabidopsis thaliana reference genome.</title>
        <authorList>
            <person name="Cheng C.Y."/>
            <person name="Krishnakumar V."/>
            <person name="Chan A.P."/>
            <person name="Thibaud-Nissen F."/>
            <person name="Schobel S."/>
            <person name="Town C.D."/>
        </authorList>
    </citation>
    <scope>GENOME REANNOTATION</scope>
    <source>
        <strain>cv. Columbia</strain>
    </source>
</reference>
<reference key="3">
    <citation type="journal article" date="2006" name="Plant Biotechnol. J.">
        <title>Simultaneous high-throughput recombinational cloning of open reading frames in closed and open configurations.</title>
        <authorList>
            <person name="Underwood B.A."/>
            <person name="Vanderhaeghen R."/>
            <person name="Whitford R."/>
            <person name="Town C.D."/>
            <person name="Hilson P."/>
        </authorList>
    </citation>
    <scope>NUCLEOTIDE SEQUENCE [LARGE SCALE MRNA] (ISOFORM 2)</scope>
    <source>
        <strain>cv. Columbia</strain>
    </source>
</reference>
<reference key="4">
    <citation type="journal article" date="2003" name="Plant Physiol.">
        <title>Members of the Arabidopsis-SKP1-like gene family exhibit a variety of expression patterns and may play diverse roles in Arabidopsis.</title>
        <authorList>
            <person name="Zhao D."/>
            <person name="Ni W."/>
            <person name="Feng B."/>
            <person name="Han T."/>
            <person name="Petrasek M.G."/>
            <person name="Ma H."/>
        </authorList>
    </citation>
    <scope>GENE FAMILY</scope>
    <scope>NOMENCLATURE</scope>
    <scope>TISSUE SPECIFICITY</scope>
    <scope>DEVELOPMENTAL STAGE</scope>
</reference>
<evidence type="ECO:0000250" key="1"/>
<evidence type="ECO:0000269" key="2">
    <source>
    </source>
</evidence>
<evidence type="ECO:0000303" key="3">
    <source>
    </source>
</evidence>
<evidence type="ECO:0000305" key="4"/>
<keyword id="KW-0025">Alternative splicing</keyword>
<keyword id="KW-0539">Nucleus</keyword>
<keyword id="KW-1185">Reference proteome</keyword>
<keyword id="KW-0833">Ubl conjugation pathway</keyword>
<protein>
    <recommendedName>
        <fullName>SKP1-like protein 15</fullName>
        <shortName>AtSK15</shortName>
    </recommendedName>
</protein>
<accession>Q1PEL7</accession>
<accession>Q9LI78</accession>